<name>PEPT_ECOLU</name>
<accession>B7N3N7</accession>
<keyword id="KW-0031">Aminopeptidase</keyword>
<keyword id="KW-0963">Cytoplasm</keyword>
<keyword id="KW-0378">Hydrolase</keyword>
<keyword id="KW-0479">Metal-binding</keyword>
<keyword id="KW-0482">Metalloprotease</keyword>
<keyword id="KW-0645">Protease</keyword>
<keyword id="KW-0862">Zinc</keyword>
<reference key="1">
    <citation type="journal article" date="2009" name="PLoS Genet.">
        <title>Organised genome dynamics in the Escherichia coli species results in highly diverse adaptive paths.</title>
        <authorList>
            <person name="Touchon M."/>
            <person name="Hoede C."/>
            <person name="Tenaillon O."/>
            <person name="Barbe V."/>
            <person name="Baeriswyl S."/>
            <person name="Bidet P."/>
            <person name="Bingen E."/>
            <person name="Bonacorsi S."/>
            <person name="Bouchier C."/>
            <person name="Bouvet O."/>
            <person name="Calteau A."/>
            <person name="Chiapello H."/>
            <person name="Clermont O."/>
            <person name="Cruveiller S."/>
            <person name="Danchin A."/>
            <person name="Diard M."/>
            <person name="Dossat C."/>
            <person name="Karoui M.E."/>
            <person name="Frapy E."/>
            <person name="Garry L."/>
            <person name="Ghigo J.M."/>
            <person name="Gilles A.M."/>
            <person name="Johnson J."/>
            <person name="Le Bouguenec C."/>
            <person name="Lescat M."/>
            <person name="Mangenot S."/>
            <person name="Martinez-Jehanne V."/>
            <person name="Matic I."/>
            <person name="Nassif X."/>
            <person name="Oztas S."/>
            <person name="Petit M.A."/>
            <person name="Pichon C."/>
            <person name="Rouy Z."/>
            <person name="Ruf C.S."/>
            <person name="Schneider D."/>
            <person name="Tourret J."/>
            <person name="Vacherie B."/>
            <person name="Vallenet D."/>
            <person name="Medigue C."/>
            <person name="Rocha E.P.C."/>
            <person name="Denamur E."/>
        </authorList>
    </citation>
    <scope>NUCLEOTIDE SEQUENCE [LARGE SCALE GENOMIC DNA]</scope>
    <source>
        <strain>UMN026 / ExPEC</strain>
    </source>
</reference>
<organism>
    <name type="scientific">Escherichia coli O17:K52:H18 (strain UMN026 / ExPEC)</name>
    <dbReference type="NCBI Taxonomy" id="585056"/>
    <lineage>
        <taxon>Bacteria</taxon>
        <taxon>Pseudomonadati</taxon>
        <taxon>Pseudomonadota</taxon>
        <taxon>Gammaproteobacteria</taxon>
        <taxon>Enterobacterales</taxon>
        <taxon>Enterobacteriaceae</taxon>
        <taxon>Escherichia</taxon>
    </lineage>
</organism>
<protein>
    <recommendedName>
        <fullName evidence="1">Peptidase T</fullName>
        <ecNumber evidence="1">3.4.11.4</ecNumber>
    </recommendedName>
    <alternativeName>
        <fullName evidence="1">Aminotripeptidase</fullName>
        <shortName evidence="1">Tripeptidase</shortName>
    </alternativeName>
    <alternativeName>
        <fullName evidence="1">Tripeptide aminopeptidase</fullName>
    </alternativeName>
</protein>
<comment type="function">
    <text evidence="1">Cleaves the N-terminal amino acid of tripeptides.</text>
</comment>
<comment type="catalytic activity">
    <reaction evidence="1">
        <text>Release of the N-terminal residue from a tripeptide.</text>
        <dbReference type="EC" id="3.4.11.4"/>
    </reaction>
</comment>
<comment type="cofactor">
    <cofactor evidence="1">
        <name>Zn(2+)</name>
        <dbReference type="ChEBI" id="CHEBI:29105"/>
    </cofactor>
    <text evidence="1">Binds 2 Zn(2+) ions per subunit.</text>
</comment>
<comment type="subcellular location">
    <subcellularLocation>
        <location evidence="1">Cytoplasm</location>
    </subcellularLocation>
</comment>
<comment type="similarity">
    <text evidence="1">Belongs to the peptidase M20B family.</text>
</comment>
<gene>
    <name evidence="1" type="primary">pepT</name>
    <name type="ordered locus">ECUMN_1371</name>
</gene>
<sequence length="408" mass="44909">MDKLLERFLNYVSLDTQSKAGVRQVPSTEGQWKLLHLLKEQLEEMGLINVTLSEKGTLMATLPANVPGDIPAIGFISHVDTSPDCSGKNVNPQIVENYRGGDIALGIGDEVLSPVMFPVLHQLLGQTLITTDGKTLLGADDKAGIAEIMTALAVLQQKNIPHGDIRVAFTPDEEVGKGAKHFDVDAFDARWAYTVDGGGVGELEFENFNAASVNIKIVGNNVHPGTAKGVMVNALSLAARIHAEVPADESPEMTEGYEGFYHLASMKGTVERADMHYIIRDFDRKQFEARKRKMMEIAKKVGKGLHPDCYIELVIEDSYYNMREKVVEHPHILDIAQQAMRDCDIEPELKPIRGGTDGAQLSFMGLPCPNLFTGGYNYHGKHEFVTLEGMEKAVQVIVRIAELTAQRK</sequence>
<proteinExistence type="inferred from homology"/>
<feature type="chain" id="PRO_1000129030" description="Peptidase T">
    <location>
        <begin position="1"/>
        <end position="408"/>
    </location>
</feature>
<feature type="active site" evidence="1">
    <location>
        <position position="80"/>
    </location>
</feature>
<feature type="active site" description="Proton acceptor" evidence="1">
    <location>
        <position position="173"/>
    </location>
</feature>
<feature type="binding site" evidence="1">
    <location>
        <position position="78"/>
    </location>
    <ligand>
        <name>Zn(2+)</name>
        <dbReference type="ChEBI" id="CHEBI:29105"/>
        <label>1</label>
    </ligand>
</feature>
<feature type="binding site" evidence="1">
    <location>
        <position position="140"/>
    </location>
    <ligand>
        <name>Zn(2+)</name>
        <dbReference type="ChEBI" id="CHEBI:29105"/>
        <label>1</label>
    </ligand>
</feature>
<feature type="binding site" evidence="1">
    <location>
        <position position="140"/>
    </location>
    <ligand>
        <name>Zn(2+)</name>
        <dbReference type="ChEBI" id="CHEBI:29105"/>
        <label>2</label>
    </ligand>
</feature>
<feature type="binding site" evidence="1">
    <location>
        <position position="174"/>
    </location>
    <ligand>
        <name>Zn(2+)</name>
        <dbReference type="ChEBI" id="CHEBI:29105"/>
        <label>2</label>
    </ligand>
</feature>
<feature type="binding site" evidence="1">
    <location>
        <position position="196"/>
    </location>
    <ligand>
        <name>Zn(2+)</name>
        <dbReference type="ChEBI" id="CHEBI:29105"/>
        <label>1</label>
    </ligand>
</feature>
<feature type="binding site" evidence="1">
    <location>
        <position position="379"/>
    </location>
    <ligand>
        <name>Zn(2+)</name>
        <dbReference type="ChEBI" id="CHEBI:29105"/>
        <label>2</label>
    </ligand>
</feature>
<evidence type="ECO:0000255" key="1">
    <source>
        <dbReference type="HAMAP-Rule" id="MF_00550"/>
    </source>
</evidence>
<dbReference type="EC" id="3.4.11.4" evidence="1"/>
<dbReference type="EMBL" id="CU928163">
    <property type="protein sequence ID" value="CAR12580.1"/>
    <property type="molecule type" value="Genomic_DNA"/>
</dbReference>
<dbReference type="RefSeq" id="WP_000359446.1">
    <property type="nucleotide sequence ID" value="NC_011751.1"/>
</dbReference>
<dbReference type="RefSeq" id="YP_002412120.1">
    <property type="nucleotide sequence ID" value="NC_011751.1"/>
</dbReference>
<dbReference type="SMR" id="B7N3N7"/>
<dbReference type="STRING" id="585056.ECUMN_1371"/>
<dbReference type="MEROPS" id="M20.003"/>
<dbReference type="GeneID" id="93776283"/>
<dbReference type="KEGG" id="eum:ECUMN_1371"/>
<dbReference type="PATRIC" id="fig|585056.7.peg.1576"/>
<dbReference type="HOGENOM" id="CLU_053676_0_0_6"/>
<dbReference type="Proteomes" id="UP000007097">
    <property type="component" value="Chromosome"/>
</dbReference>
<dbReference type="GO" id="GO:0005829">
    <property type="term" value="C:cytosol"/>
    <property type="evidence" value="ECO:0007669"/>
    <property type="project" value="TreeGrafter"/>
</dbReference>
<dbReference type="GO" id="GO:0008237">
    <property type="term" value="F:metallopeptidase activity"/>
    <property type="evidence" value="ECO:0007669"/>
    <property type="project" value="UniProtKB-KW"/>
</dbReference>
<dbReference type="GO" id="GO:0045148">
    <property type="term" value="F:tripeptide aminopeptidase activity"/>
    <property type="evidence" value="ECO:0007669"/>
    <property type="project" value="UniProtKB-UniRule"/>
</dbReference>
<dbReference type="GO" id="GO:0008270">
    <property type="term" value="F:zinc ion binding"/>
    <property type="evidence" value="ECO:0007669"/>
    <property type="project" value="UniProtKB-UniRule"/>
</dbReference>
<dbReference type="GO" id="GO:0043171">
    <property type="term" value="P:peptide catabolic process"/>
    <property type="evidence" value="ECO:0007669"/>
    <property type="project" value="UniProtKB-UniRule"/>
</dbReference>
<dbReference type="GO" id="GO:0006508">
    <property type="term" value="P:proteolysis"/>
    <property type="evidence" value="ECO:0007669"/>
    <property type="project" value="UniProtKB-UniRule"/>
</dbReference>
<dbReference type="CDD" id="cd03892">
    <property type="entry name" value="M20_peptT"/>
    <property type="match status" value="1"/>
</dbReference>
<dbReference type="FunFam" id="3.30.70.360:FF:000002">
    <property type="entry name" value="Peptidase T"/>
    <property type="match status" value="1"/>
</dbReference>
<dbReference type="Gene3D" id="3.30.70.360">
    <property type="match status" value="1"/>
</dbReference>
<dbReference type="Gene3D" id="3.40.630.10">
    <property type="entry name" value="Zn peptidases"/>
    <property type="match status" value="1"/>
</dbReference>
<dbReference type="HAMAP" id="MF_00550">
    <property type="entry name" value="Aminopeptidase_M20"/>
    <property type="match status" value="1"/>
</dbReference>
<dbReference type="InterPro" id="IPR001261">
    <property type="entry name" value="ArgE/DapE_CS"/>
</dbReference>
<dbReference type="InterPro" id="IPR036264">
    <property type="entry name" value="Bact_exopeptidase_dim_dom"/>
</dbReference>
<dbReference type="InterPro" id="IPR002933">
    <property type="entry name" value="Peptidase_M20"/>
</dbReference>
<dbReference type="InterPro" id="IPR011650">
    <property type="entry name" value="Peptidase_M20_dimer"/>
</dbReference>
<dbReference type="InterPro" id="IPR010161">
    <property type="entry name" value="Peptidase_M20B"/>
</dbReference>
<dbReference type="NCBIfam" id="TIGR01882">
    <property type="entry name" value="peptidase-T"/>
    <property type="match status" value="1"/>
</dbReference>
<dbReference type="NCBIfam" id="NF003976">
    <property type="entry name" value="PRK05469.1"/>
    <property type="match status" value="1"/>
</dbReference>
<dbReference type="NCBIfam" id="NF009920">
    <property type="entry name" value="PRK13381.1"/>
    <property type="match status" value="1"/>
</dbReference>
<dbReference type="PANTHER" id="PTHR42994">
    <property type="entry name" value="PEPTIDASE T"/>
    <property type="match status" value="1"/>
</dbReference>
<dbReference type="PANTHER" id="PTHR42994:SF1">
    <property type="entry name" value="PEPTIDASE T"/>
    <property type="match status" value="1"/>
</dbReference>
<dbReference type="Pfam" id="PF07687">
    <property type="entry name" value="M20_dimer"/>
    <property type="match status" value="1"/>
</dbReference>
<dbReference type="Pfam" id="PF01546">
    <property type="entry name" value="Peptidase_M20"/>
    <property type="match status" value="1"/>
</dbReference>
<dbReference type="PIRSF" id="PIRSF037215">
    <property type="entry name" value="Peptidase_M20B"/>
    <property type="match status" value="1"/>
</dbReference>
<dbReference type="SUPFAM" id="SSF55031">
    <property type="entry name" value="Bacterial exopeptidase dimerisation domain"/>
    <property type="match status" value="1"/>
</dbReference>
<dbReference type="SUPFAM" id="SSF53187">
    <property type="entry name" value="Zn-dependent exopeptidases"/>
    <property type="match status" value="1"/>
</dbReference>
<dbReference type="PROSITE" id="PS00758">
    <property type="entry name" value="ARGE_DAPE_CPG2_1"/>
    <property type="match status" value="1"/>
</dbReference>
<dbReference type="PROSITE" id="PS00759">
    <property type="entry name" value="ARGE_DAPE_CPG2_2"/>
    <property type="match status" value="1"/>
</dbReference>